<evidence type="ECO:0000255" key="1">
    <source>
        <dbReference type="HAMAP-Rule" id="MF_01367"/>
    </source>
</evidence>
<evidence type="ECO:0000305" key="2"/>
<sequence length="119" mass="12599">MIQKNTLLEVADNSGARAVLCIGLLGGRKSASIGDTVIVSTKSITPRGKVEKGKVYRAVVVRVKSPIRKSDGSVIRFSSNAVVLINDQGEPLGTRVFGPVKKLSSGSFMKIMSLAVEVL</sequence>
<comment type="function">
    <text evidence="1">Binds to 23S rRNA. Forms part of two intersubunit bridges in the 70S ribosome.</text>
</comment>
<comment type="subunit">
    <text evidence="1">Part of the 50S ribosomal subunit. Forms a cluster with proteins L3 and L19. In the 70S ribosome, L14 and L19 interact and together make contacts with the 16S rRNA in bridges B5 and B8.</text>
</comment>
<comment type="similarity">
    <text evidence="1">Belongs to the universal ribosomal protein uL14 family.</text>
</comment>
<keyword id="KW-0687">Ribonucleoprotein</keyword>
<keyword id="KW-0689">Ribosomal protein</keyword>
<keyword id="KW-0694">RNA-binding</keyword>
<keyword id="KW-0699">rRNA-binding</keyword>
<protein>
    <recommendedName>
        <fullName evidence="1">Large ribosomal subunit protein uL14</fullName>
    </recommendedName>
    <alternativeName>
        <fullName evidence="2">50S ribosomal protein L14</fullName>
    </alternativeName>
</protein>
<proteinExistence type="inferred from homology"/>
<dbReference type="EMBL" id="AE017196">
    <property type="protein sequence ID" value="AAS14369.1"/>
    <property type="molecule type" value="Genomic_DNA"/>
</dbReference>
<dbReference type="RefSeq" id="WP_006279348.1">
    <property type="nucleotide sequence ID" value="NZ_OX384529.1"/>
</dbReference>
<dbReference type="SMR" id="Q73H96"/>
<dbReference type="EnsemblBacteria" id="AAS14369">
    <property type="protein sequence ID" value="AAS14369"/>
    <property type="gene ID" value="WD_0671"/>
</dbReference>
<dbReference type="GeneID" id="70036154"/>
<dbReference type="KEGG" id="wol:WD_0671"/>
<dbReference type="eggNOG" id="COG0093">
    <property type="taxonomic scope" value="Bacteria"/>
</dbReference>
<dbReference type="Proteomes" id="UP000008215">
    <property type="component" value="Chromosome"/>
</dbReference>
<dbReference type="GO" id="GO:0022625">
    <property type="term" value="C:cytosolic large ribosomal subunit"/>
    <property type="evidence" value="ECO:0007669"/>
    <property type="project" value="TreeGrafter"/>
</dbReference>
<dbReference type="GO" id="GO:0070180">
    <property type="term" value="F:large ribosomal subunit rRNA binding"/>
    <property type="evidence" value="ECO:0007669"/>
    <property type="project" value="TreeGrafter"/>
</dbReference>
<dbReference type="GO" id="GO:0003735">
    <property type="term" value="F:structural constituent of ribosome"/>
    <property type="evidence" value="ECO:0007669"/>
    <property type="project" value="InterPro"/>
</dbReference>
<dbReference type="GO" id="GO:0006412">
    <property type="term" value="P:translation"/>
    <property type="evidence" value="ECO:0007669"/>
    <property type="project" value="UniProtKB-UniRule"/>
</dbReference>
<dbReference type="CDD" id="cd00337">
    <property type="entry name" value="Ribosomal_uL14"/>
    <property type="match status" value="1"/>
</dbReference>
<dbReference type="Gene3D" id="2.40.150.20">
    <property type="entry name" value="Ribosomal protein L14"/>
    <property type="match status" value="1"/>
</dbReference>
<dbReference type="HAMAP" id="MF_01367">
    <property type="entry name" value="Ribosomal_uL14"/>
    <property type="match status" value="1"/>
</dbReference>
<dbReference type="InterPro" id="IPR000218">
    <property type="entry name" value="Ribosomal_uL14"/>
</dbReference>
<dbReference type="InterPro" id="IPR005745">
    <property type="entry name" value="Ribosomal_uL14_bac-type"/>
</dbReference>
<dbReference type="InterPro" id="IPR019972">
    <property type="entry name" value="Ribosomal_uL14_CS"/>
</dbReference>
<dbReference type="InterPro" id="IPR036853">
    <property type="entry name" value="Ribosomal_uL14_sf"/>
</dbReference>
<dbReference type="NCBIfam" id="TIGR01067">
    <property type="entry name" value="rplN_bact"/>
    <property type="match status" value="1"/>
</dbReference>
<dbReference type="PANTHER" id="PTHR11761">
    <property type="entry name" value="50S/60S RIBOSOMAL PROTEIN L14/L23"/>
    <property type="match status" value="1"/>
</dbReference>
<dbReference type="PANTHER" id="PTHR11761:SF3">
    <property type="entry name" value="LARGE RIBOSOMAL SUBUNIT PROTEIN UL14M"/>
    <property type="match status" value="1"/>
</dbReference>
<dbReference type="Pfam" id="PF00238">
    <property type="entry name" value="Ribosomal_L14"/>
    <property type="match status" value="1"/>
</dbReference>
<dbReference type="SMART" id="SM01374">
    <property type="entry name" value="Ribosomal_L14"/>
    <property type="match status" value="1"/>
</dbReference>
<dbReference type="SUPFAM" id="SSF50193">
    <property type="entry name" value="Ribosomal protein L14"/>
    <property type="match status" value="1"/>
</dbReference>
<dbReference type="PROSITE" id="PS00049">
    <property type="entry name" value="RIBOSOMAL_L14"/>
    <property type="match status" value="1"/>
</dbReference>
<accession>Q73H96</accession>
<gene>
    <name evidence="1" type="primary">rplN</name>
    <name type="ordered locus">WD_0671</name>
</gene>
<name>RL14_WOLPM</name>
<feature type="chain" id="PRO_0000355841" description="Large ribosomal subunit protein uL14">
    <location>
        <begin position="1"/>
        <end position="119"/>
    </location>
</feature>
<reference key="1">
    <citation type="journal article" date="2004" name="PLoS Biol.">
        <title>Phylogenomics of the reproductive parasite Wolbachia pipientis wMel: a streamlined genome overrun by mobile genetic elements.</title>
        <authorList>
            <person name="Wu M."/>
            <person name="Sun L.V."/>
            <person name="Vamathevan J.J."/>
            <person name="Riegler M."/>
            <person name="DeBoy R.T."/>
            <person name="Brownlie J.C."/>
            <person name="McGraw E.A."/>
            <person name="Martin W."/>
            <person name="Esser C."/>
            <person name="Ahmadinejad N."/>
            <person name="Wiegand C."/>
            <person name="Madupu R."/>
            <person name="Beanan M.J."/>
            <person name="Brinkac L.M."/>
            <person name="Daugherty S.C."/>
            <person name="Durkin A.S."/>
            <person name="Kolonay J.F."/>
            <person name="Nelson W.C."/>
            <person name="Mohamoud Y."/>
            <person name="Lee P."/>
            <person name="Berry K.J."/>
            <person name="Young M.B."/>
            <person name="Utterback T.R."/>
            <person name="Weidman J.F."/>
            <person name="Nierman W.C."/>
            <person name="Paulsen I.T."/>
            <person name="Nelson K.E."/>
            <person name="Tettelin H."/>
            <person name="O'Neill S.L."/>
            <person name="Eisen J.A."/>
        </authorList>
    </citation>
    <scope>NUCLEOTIDE SEQUENCE [LARGE SCALE GENOMIC DNA]</scope>
</reference>
<organism>
    <name type="scientific">Wolbachia pipientis wMel</name>
    <dbReference type="NCBI Taxonomy" id="163164"/>
    <lineage>
        <taxon>Bacteria</taxon>
        <taxon>Pseudomonadati</taxon>
        <taxon>Pseudomonadota</taxon>
        <taxon>Alphaproteobacteria</taxon>
        <taxon>Rickettsiales</taxon>
        <taxon>Anaplasmataceae</taxon>
        <taxon>Wolbachieae</taxon>
        <taxon>Wolbachia</taxon>
    </lineage>
</organism>